<keyword id="KW-0687">Ribonucleoprotein</keyword>
<keyword id="KW-0689">Ribosomal protein</keyword>
<keyword id="KW-0694">RNA-binding</keyword>
<keyword id="KW-0699">rRNA-binding</keyword>
<name>RS14_CORGB</name>
<protein>
    <recommendedName>
        <fullName evidence="1">Small ribosomal subunit protein uS14</fullName>
    </recommendedName>
    <alternativeName>
        <fullName evidence="3">30S ribosomal protein S14</fullName>
    </alternativeName>
</protein>
<proteinExistence type="inferred from homology"/>
<sequence length="101" mass="11801">MAKKSKIAKNEKRKEIVARYAERRAELKAIIRNPNTSDEDRLDAQFELNSQPRDAAAVRVRNRDSHDGRPRGYLRKFGLSRVRMREMAHRGELPGVRKSSW</sequence>
<organism>
    <name type="scientific">Corynebacterium glutamicum (strain R)</name>
    <dbReference type="NCBI Taxonomy" id="340322"/>
    <lineage>
        <taxon>Bacteria</taxon>
        <taxon>Bacillati</taxon>
        <taxon>Actinomycetota</taxon>
        <taxon>Actinomycetes</taxon>
        <taxon>Mycobacteriales</taxon>
        <taxon>Corynebacteriaceae</taxon>
        <taxon>Corynebacterium</taxon>
    </lineage>
</organism>
<evidence type="ECO:0000255" key="1">
    <source>
        <dbReference type="HAMAP-Rule" id="MF_00537"/>
    </source>
</evidence>
<evidence type="ECO:0000256" key="2">
    <source>
        <dbReference type="SAM" id="MobiDB-lite"/>
    </source>
</evidence>
<evidence type="ECO:0000305" key="3"/>
<comment type="function">
    <text evidence="1">Binds 16S rRNA, required for the assembly of 30S particles and may also be responsible for determining the conformation of the 16S rRNA at the A site.</text>
</comment>
<comment type="subunit">
    <text evidence="1">Part of the 30S ribosomal subunit. Contacts proteins S3 and S10.</text>
</comment>
<comment type="similarity">
    <text evidence="1">Belongs to the universal ribosomal protein uS14 family.</text>
</comment>
<dbReference type="EMBL" id="AP009044">
    <property type="protein sequence ID" value="BAF53956.1"/>
    <property type="molecule type" value="Genomic_DNA"/>
</dbReference>
<dbReference type="RefSeq" id="WP_003858409.1">
    <property type="nucleotide sequence ID" value="NC_009342.1"/>
</dbReference>
<dbReference type="SMR" id="A4QCK9"/>
<dbReference type="KEGG" id="cgt:cgR_0981"/>
<dbReference type="HOGENOM" id="CLU_139869_0_1_11"/>
<dbReference type="PhylomeDB" id="A4QCK9"/>
<dbReference type="Proteomes" id="UP000006698">
    <property type="component" value="Chromosome"/>
</dbReference>
<dbReference type="GO" id="GO:0015935">
    <property type="term" value="C:small ribosomal subunit"/>
    <property type="evidence" value="ECO:0007669"/>
    <property type="project" value="TreeGrafter"/>
</dbReference>
<dbReference type="GO" id="GO:0019843">
    <property type="term" value="F:rRNA binding"/>
    <property type="evidence" value="ECO:0007669"/>
    <property type="project" value="UniProtKB-UniRule"/>
</dbReference>
<dbReference type="GO" id="GO:0003735">
    <property type="term" value="F:structural constituent of ribosome"/>
    <property type="evidence" value="ECO:0007669"/>
    <property type="project" value="InterPro"/>
</dbReference>
<dbReference type="GO" id="GO:0006412">
    <property type="term" value="P:translation"/>
    <property type="evidence" value="ECO:0007669"/>
    <property type="project" value="UniProtKB-UniRule"/>
</dbReference>
<dbReference type="FunFam" id="1.10.287.1480:FF:000001">
    <property type="entry name" value="30S ribosomal protein S14"/>
    <property type="match status" value="1"/>
</dbReference>
<dbReference type="Gene3D" id="1.10.287.1480">
    <property type="match status" value="1"/>
</dbReference>
<dbReference type="HAMAP" id="MF_00537">
    <property type="entry name" value="Ribosomal_uS14_1"/>
    <property type="match status" value="1"/>
</dbReference>
<dbReference type="InterPro" id="IPR001209">
    <property type="entry name" value="Ribosomal_uS14"/>
</dbReference>
<dbReference type="InterPro" id="IPR023036">
    <property type="entry name" value="Ribosomal_uS14_bac/plastid"/>
</dbReference>
<dbReference type="NCBIfam" id="NF006477">
    <property type="entry name" value="PRK08881.1"/>
    <property type="match status" value="1"/>
</dbReference>
<dbReference type="PANTHER" id="PTHR19836">
    <property type="entry name" value="30S RIBOSOMAL PROTEIN S14"/>
    <property type="match status" value="1"/>
</dbReference>
<dbReference type="PANTHER" id="PTHR19836:SF23">
    <property type="entry name" value="SMALL RIBOSOMAL SUBUNIT PROTEIN US14A"/>
    <property type="match status" value="1"/>
</dbReference>
<dbReference type="Pfam" id="PF00253">
    <property type="entry name" value="Ribosomal_S14"/>
    <property type="match status" value="1"/>
</dbReference>
<dbReference type="SUPFAM" id="SSF57716">
    <property type="entry name" value="Glucocorticoid receptor-like (DNA-binding domain)"/>
    <property type="match status" value="1"/>
</dbReference>
<feature type="chain" id="PRO_1000128370" description="Small ribosomal subunit protein uS14">
    <location>
        <begin position="1"/>
        <end position="101"/>
    </location>
</feature>
<feature type="region of interest" description="Disordered" evidence="2">
    <location>
        <begin position="53"/>
        <end position="72"/>
    </location>
</feature>
<feature type="compositionally biased region" description="Basic and acidic residues" evidence="2">
    <location>
        <begin position="61"/>
        <end position="70"/>
    </location>
</feature>
<reference key="1">
    <citation type="journal article" date="2007" name="Microbiology">
        <title>Comparative analysis of the Corynebacterium glutamicum group and complete genome sequence of strain R.</title>
        <authorList>
            <person name="Yukawa H."/>
            <person name="Omumasaba C.A."/>
            <person name="Nonaka H."/>
            <person name="Kos P."/>
            <person name="Okai N."/>
            <person name="Suzuki N."/>
            <person name="Suda M."/>
            <person name="Tsuge Y."/>
            <person name="Watanabe J."/>
            <person name="Ikeda Y."/>
            <person name="Vertes A.A."/>
            <person name="Inui M."/>
        </authorList>
    </citation>
    <scope>NUCLEOTIDE SEQUENCE [LARGE SCALE GENOMIC DNA]</scope>
    <source>
        <strain>R</strain>
    </source>
</reference>
<accession>A4QCK9</accession>
<gene>
    <name evidence="1" type="primary">rpsN</name>
    <name type="ordered locus">cgR_0981</name>
</gene>